<protein>
    <recommendedName>
        <fullName evidence="1">Large ribosomal subunit protein bL20</fullName>
    </recommendedName>
    <alternativeName>
        <fullName evidence="2">50S ribosomal protein L20</fullName>
    </alternativeName>
</protein>
<dbReference type="EMBL" id="AE004092">
    <property type="protein sequence ID" value="AAK33743.1"/>
    <property type="molecule type" value="Genomic_DNA"/>
</dbReference>
<dbReference type="EMBL" id="CP000017">
    <property type="protein sequence ID" value="AAZ51239.1"/>
    <property type="molecule type" value="Genomic_DNA"/>
</dbReference>
<dbReference type="RefSeq" id="NP_269022.1">
    <property type="nucleotide sequence ID" value="NC_002737.2"/>
</dbReference>
<dbReference type="SMR" id="P66114"/>
<dbReference type="PaxDb" id="1314-HKU360_00632"/>
<dbReference type="KEGG" id="spy:SPy_0806"/>
<dbReference type="KEGG" id="spz:M5005_Spy0621"/>
<dbReference type="PATRIC" id="fig|160490.10.peg.689"/>
<dbReference type="HOGENOM" id="CLU_123265_0_1_9"/>
<dbReference type="OMA" id="GRRKNVW"/>
<dbReference type="PRO" id="PR:P66114"/>
<dbReference type="Proteomes" id="UP000000750">
    <property type="component" value="Chromosome"/>
</dbReference>
<dbReference type="GO" id="GO:1990904">
    <property type="term" value="C:ribonucleoprotein complex"/>
    <property type="evidence" value="ECO:0007669"/>
    <property type="project" value="UniProtKB-KW"/>
</dbReference>
<dbReference type="GO" id="GO:0005840">
    <property type="term" value="C:ribosome"/>
    <property type="evidence" value="ECO:0007669"/>
    <property type="project" value="UniProtKB-KW"/>
</dbReference>
<dbReference type="GO" id="GO:0019843">
    <property type="term" value="F:rRNA binding"/>
    <property type="evidence" value="ECO:0007669"/>
    <property type="project" value="UniProtKB-UniRule"/>
</dbReference>
<dbReference type="GO" id="GO:0003735">
    <property type="term" value="F:structural constituent of ribosome"/>
    <property type="evidence" value="ECO:0007669"/>
    <property type="project" value="InterPro"/>
</dbReference>
<dbReference type="GO" id="GO:0000027">
    <property type="term" value="P:ribosomal large subunit assembly"/>
    <property type="evidence" value="ECO:0007669"/>
    <property type="project" value="UniProtKB-UniRule"/>
</dbReference>
<dbReference type="GO" id="GO:0006412">
    <property type="term" value="P:translation"/>
    <property type="evidence" value="ECO:0007669"/>
    <property type="project" value="InterPro"/>
</dbReference>
<dbReference type="CDD" id="cd07026">
    <property type="entry name" value="Ribosomal_L20"/>
    <property type="match status" value="1"/>
</dbReference>
<dbReference type="FunFam" id="1.10.1900.20:FF:000001">
    <property type="entry name" value="50S ribosomal protein L20"/>
    <property type="match status" value="1"/>
</dbReference>
<dbReference type="Gene3D" id="6.10.160.10">
    <property type="match status" value="1"/>
</dbReference>
<dbReference type="Gene3D" id="1.10.1900.20">
    <property type="entry name" value="Ribosomal protein L20"/>
    <property type="match status" value="1"/>
</dbReference>
<dbReference type="HAMAP" id="MF_00382">
    <property type="entry name" value="Ribosomal_bL20"/>
    <property type="match status" value="1"/>
</dbReference>
<dbReference type="InterPro" id="IPR005813">
    <property type="entry name" value="Ribosomal_bL20"/>
</dbReference>
<dbReference type="InterPro" id="IPR049946">
    <property type="entry name" value="RIBOSOMAL_L20_CS"/>
</dbReference>
<dbReference type="InterPro" id="IPR035566">
    <property type="entry name" value="Ribosomal_protein_bL20_C"/>
</dbReference>
<dbReference type="NCBIfam" id="TIGR01032">
    <property type="entry name" value="rplT_bact"/>
    <property type="match status" value="1"/>
</dbReference>
<dbReference type="PANTHER" id="PTHR10986">
    <property type="entry name" value="39S RIBOSOMAL PROTEIN L20"/>
    <property type="match status" value="1"/>
</dbReference>
<dbReference type="Pfam" id="PF00453">
    <property type="entry name" value="Ribosomal_L20"/>
    <property type="match status" value="1"/>
</dbReference>
<dbReference type="PRINTS" id="PR00062">
    <property type="entry name" value="RIBOSOMALL20"/>
</dbReference>
<dbReference type="SUPFAM" id="SSF74731">
    <property type="entry name" value="Ribosomal protein L20"/>
    <property type="match status" value="1"/>
</dbReference>
<dbReference type="PROSITE" id="PS00937">
    <property type="entry name" value="RIBOSOMAL_L20"/>
    <property type="match status" value="1"/>
</dbReference>
<reference key="1">
    <citation type="journal article" date="2001" name="Proc. Natl. Acad. Sci. U.S.A.">
        <title>Complete genome sequence of an M1 strain of Streptococcus pyogenes.</title>
        <authorList>
            <person name="Ferretti J.J."/>
            <person name="McShan W.M."/>
            <person name="Ajdic D.J."/>
            <person name="Savic D.J."/>
            <person name="Savic G."/>
            <person name="Lyon K."/>
            <person name="Primeaux C."/>
            <person name="Sezate S."/>
            <person name="Suvorov A.N."/>
            <person name="Kenton S."/>
            <person name="Lai H.S."/>
            <person name="Lin S.P."/>
            <person name="Qian Y."/>
            <person name="Jia H.G."/>
            <person name="Najar F.Z."/>
            <person name="Ren Q."/>
            <person name="Zhu H."/>
            <person name="Song L."/>
            <person name="White J."/>
            <person name="Yuan X."/>
            <person name="Clifton S.W."/>
            <person name="Roe B.A."/>
            <person name="McLaughlin R.E."/>
        </authorList>
    </citation>
    <scope>NUCLEOTIDE SEQUENCE [LARGE SCALE GENOMIC DNA]</scope>
    <source>
        <strain>ATCC 700294 / SF370 / Serotype M1</strain>
    </source>
</reference>
<reference key="2">
    <citation type="journal article" date="2005" name="J. Infect. Dis.">
        <title>Evolutionary origin and emergence of a highly successful clone of serotype M1 group A Streptococcus involved multiple horizontal gene transfer events.</title>
        <authorList>
            <person name="Sumby P."/>
            <person name="Porcella S.F."/>
            <person name="Madrigal A.G."/>
            <person name="Barbian K.D."/>
            <person name="Virtaneva K."/>
            <person name="Ricklefs S.M."/>
            <person name="Sturdevant D.E."/>
            <person name="Graham M.R."/>
            <person name="Vuopio-Varkila J."/>
            <person name="Hoe N.P."/>
            <person name="Musser J.M."/>
        </authorList>
    </citation>
    <scope>NUCLEOTIDE SEQUENCE [LARGE SCALE GENOMIC DNA]</scope>
    <source>
        <strain>ATCC BAA-947 / MGAS5005 / Serotype M1</strain>
    </source>
</reference>
<comment type="function">
    <text evidence="1">Binds directly to 23S ribosomal RNA and is necessary for the in vitro assembly process of the 50S ribosomal subunit. It is not involved in the protein synthesizing functions of that subunit.</text>
</comment>
<comment type="similarity">
    <text evidence="1">Belongs to the bacterial ribosomal protein bL20 family.</text>
</comment>
<name>RL20_STRP1</name>
<keyword id="KW-1185">Reference proteome</keyword>
<keyword id="KW-0687">Ribonucleoprotein</keyword>
<keyword id="KW-0689">Ribosomal protein</keyword>
<keyword id="KW-0694">RNA-binding</keyword>
<keyword id="KW-0699">rRNA-binding</keyword>
<sequence>MARVKGGVVSRKRRKRILKLAKGYYGAKHILFRTAKEQVMNSYYYAYRDRRQKKRDFRKLWITRINAAARMNGLSYSQLMHGLKLAEIEVNRKMLADLAVADAAAFTALADAAKAKLGK</sequence>
<evidence type="ECO:0000255" key="1">
    <source>
        <dbReference type="HAMAP-Rule" id="MF_00382"/>
    </source>
</evidence>
<evidence type="ECO:0000305" key="2"/>
<accession>P66114</accession>
<accession>Q48ZH9</accession>
<accession>Q9A0E8</accession>
<proteinExistence type="inferred from homology"/>
<organism>
    <name type="scientific">Streptococcus pyogenes serotype M1</name>
    <dbReference type="NCBI Taxonomy" id="301447"/>
    <lineage>
        <taxon>Bacteria</taxon>
        <taxon>Bacillati</taxon>
        <taxon>Bacillota</taxon>
        <taxon>Bacilli</taxon>
        <taxon>Lactobacillales</taxon>
        <taxon>Streptococcaceae</taxon>
        <taxon>Streptococcus</taxon>
    </lineage>
</organism>
<feature type="chain" id="PRO_0000177240" description="Large ribosomal subunit protein bL20">
    <location>
        <begin position="1"/>
        <end position="119"/>
    </location>
</feature>
<gene>
    <name evidence="1" type="primary">rplT</name>
    <name type="synonym">rl20</name>
    <name type="ordered locus">SPy_0806</name>
    <name type="ordered locus">M5005_Spy0621</name>
</gene>